<sequence>MKETIVAQATAPGRGGIGILRVSGPLATKVAQAILGKCPKPRMADYLPFKDADGTILDQGIALYFKSPNSFTGEDVLELQGHGGQVVLDLLLKRILQIDGIRLARPGEFSEQAFLNDKLDLAQAEAIADLIDATSEQAARSALKSLQGEFSKKVNELVDSVIYLRTYVEASIDFPDEEIDFLADGKIEANLRGIINQLENVRSEAKQGSILREGMKVVIAGRPNAGKSSLLNALAGREAAIVTDIAGTTRDVLREHIHIDGMPLHIIDTAGLRDATDEVERIGISRAWTEIEQADRIILMLDSSDPESADLSKVRSEFLAKLPSTLPVTIVRNKIDLNGEQASESEQGGYQIISLSAQTHDGVKLLRDHLKQAMGFQTGIEGGFLARRRHLDALEKAAEHLQIGLVQLTEFHAGELLAEELRLVQSYLSEITGQFTSDDLLGNIFSSFCIGK</sequence>
<comment type="function">
    <text evidence="1">Exhibits a very high intrinsic GTPase hydrolysis rate. Involved in the addition of a carboxymethylaminomethyl (cmnm) group at the wobble position (U34) of certain tRNAs, forming tRNA-cmnm(5)s(2)U34.</text>
</comment>
<comment type="cofactor">
    <cofactor evidence="1">
        <name>K(+)</name>
        <dbReference type="ChEBI" id="CHEBI:29103"/>
    </cofactor>
    <text evidence="1">Binds 1 potassium ion per subunit.</text>
</comment>
<comment type="subunit">
    <text evidence="1">Homodimer. Heterotetramer of two MnmE and two MnmG subunits.</text>
</comment>
<comment type="subcellular location">
    <subcellularLocation>
        <location evidence="1">Cytoplasm</location>
    </subcellularLocation>
</comment>
<comment type="similarity">
    <text evidence="1">Belongs to the TRAFAC class TrmE-Era-EngA-EngB-Septin-like GTPase superfamily. TrmE GTPase family.</text>
</comment>
<feature type="chain" id="PRO_1000048830" description="tRNA modification GTPase MnmE">
    <location>
        <begin position="1"/>
        <end position="452"/>
    </location>
</feature>
<feature type="domain" description="TrmE-type G">
    <location>
        <begin position="214"/>
        <end position="375"/>
    </location>
</feature>
<feature type="binding site" evidence="1">
    <location>
        <position position="21"/>
    </location>
    <ligand>
        <name>(6S)-5-formyl-5,6,7,8-tetrahydrofolate</name>
        <dbReference type="ChEBI" id="CHEBI:57457"/>
    </ligand>
</feature>
<feature type="binding site" evidence="1">
    <location>
        <position position="78"/>
    </location>
    <ligand>
        <name>(6S)-5-formyl-5,6,7,8-tetrahydrofolate</name>
        <dbReference type="ChEBI" id="CHEBI:57457"/>
    </ligand>
</feature>
<feature type="binding site" evidence="1">
    <location>
        <position position="118"/>
    </location>
    <ligand>
        <name>(6S)-5-formyl-5,6,7,8-tetrahydrofolate</name>
        <dbReference type="ChEBI" id="CHEBI:57457"/>
    </ligand>
</feature>
<feature type="binding site" evidence="1">
    <location>
        <begin position="224"/>
        <end position="229"/>
    </location>
    <ligand>
        <name>GTP</name>
        <dbReference type="ChEBI" id="CHEBI:37565"/>
    </ligand>
</feature>
<feature type="binding site" evidence="1">
    <location>
        <position position="224"/>
    </location>
    <ligand>
        <name>K(+)</name>
        <dbReference type="ChEBI" id="CHEBI:29103"/>
    </ligand>
</feature>
<feature type="binding site" evidence="1">
    <location>
        <position position="228"/>
    </location>
    <ligand>
        <name>Mg(2+)</name>
        <dbReference type="ChEBI" id="CHEBI:18420"/>
    </ligand>
</feature>
<feature type="binding site" evidence="1">
    <location>
        <begin position="243"/>
        <end position="249"/>
    </location>
    <ligand>
        <name>GTP</name>
        <dbReference type="ChEBI" id="CHEBI:37565"/>
    </ligand>
</feature>
<feature type="binding site" evidence="1">
    <location>
        <position position="243"/>
    </location>
    <ligand>
        <name>K(+)</name>
        <dbReference type="ChEBI" id="CHEBI:29103"/>
    </ligand>
</feature>
<feature type="binding site" evidence="1">
    <location>
        <position position="245"/>
    </location>
    <ligand>
        <name>K(+)</name>
        <dbReference type="ChEBI" id="CHEBI:29103"/>
    </ligand>
</feature>
<feature type="binding site" evidence="1">
    <location>
        <position position="248"/>
    </location>
    <ligand>
        <name>K(+)</name>
        <dbReference type="ChEBI" id="CHEBI:29103"/>
    </ligand>
</feature>
<feature type="binding site" evidence="1">
    <location>
        <position position="249"/>
    </location>
    <ligand>
        <name>Mg(2+)</name>
        <dbReference type="ChEBI" id="CHEBI:18420"/>
    </ligand>
</feature>
<feature type="binding site" evidence="1">
    <location>
        <begin position="268"/>
        <end position="271"/>
    </location>
    <ligand>
        <name>GTP</name>
        <dbReference type="ChEBI" id="CHEBI:37565"/>
    </ligand>
</feature>
<feature type="binding site" evidence="1">
    <location>
        <position position="452"/>
    </location>
    <ligand>
        <name>(6S)-5-formyl-5,6,7,8-tetrahydrofolate</name>
        <dbReference type="ChEBI" id="CHEBI:57457"/>
    </ligand>
</feature>
<keyword id="KW-0963">Cytoplasm</keyword>
<keyword id="KW-0342">GTP-binding</keyword>
<keyword id="KW-0378">Hydrolase</keyword>
<keyword id="KW-0460">Magnesium</keyword>
<keyword id="KW-0479">Metal-binding</keyword>
<keyword id="KW-0547">Nucleotide-binding</keyword>
<keyword id="KW-0630">Potassium</keyword>
<keyword id="KW-0819">tRNA processing</keyword>
<accession>Q4QLQ9</accession>
<name>MNME_HAEI8</name>
<proteinExistence type="inferred from homology"/>
<reference key="1">
    <citation type="journal article" date="2005" name="J. Bacteriol.">
        <title>Genomic sequence of an otitis media isolate of nontypeable Haemophilus influenzae: comparative study with H. influenzae serotype d, strain KW20.</title>
        <authorList>
            <person name="Harrison A."/>
            <person name="Dyer D.W."/>
            <person name="Gillaspy A."/>
            <person name="Ray W.C."/>
            <person name="Mungur R."/>
            <person name="Carson M.B."/>
            <person name="Zhong H."/>
            <person name="Gipson J."/>
            <person name="Gipson M."/>
            <person name="Johnson L.S."/>
            <person name="Lewis L."/>
            <person name="Bakaletz L.O."/>
            <person name="Munson R.S. Jr."/>
        </authorList>
    </citation>
    <scope>NUCLEOTIDE SEQUENCE [LARGE SCALE GENOMIC DNA]</scope>
    <source>
        <strain>86-028NP</strain>
    </source>
</reference>
<organism>
    <name type="scientific">Haemophilus influenzae (strain 86-028NP)</name>
    <dbReference type="NCBI Taxonomy" id="281310"/>
    <lineage>
        <taxon>Bacteria</taxon>
        <taxon>Pseudomonadati</taxon>
        <taxon>Pseudomonadota</taxon>
        <taxon>Gammaproteobacteria</taxon>
        <taxon>Pasteurellales</taxon>
        <taxon>Pasteurellaceae</taxon>
        <taxon>Haemophilus</taxon>
    </lineage>
</organism>
<protein>
    <recommendedName>
        <fullName evidence="1">tRNA modification GTPase MnmE</fullName>
        <ecNumber evidence="1">3.6.-.-</ecNumber>
    </recommendedName>
</protein>
<evidence type="ECO:0000255" key="1">
    <source>
        <dbReference type="HAMAP-Rule" id="MF_00379"/>
    </source>
</evidence>
<gene>
    <name evidence="1" type="primary">mnmE</name>
    <name evidence="1" type="synonym">trmE</name>
    <name type="ordered locus">NTHI1178</name>
</gene>
<dbReference type="EC" id="3.6.-.-" evidence="1"/>
<dbReference type="EMBL" id="CP000057">
    <property type="protein sequence ID" value="AAX88038.1"/>
    <property type="molecule type" value="Genomic_DNA"/>
</dbReference>
<dbReference type="RefSeq" id="WP_011272341.1">
    <property type="nucleotide sequence ID" value="NC_007146.2"/>
</dbReference>
<dbReference type="SMR" id="Q4QLQ9"/>
<dbReference type="KEGG" id="hit:NTHI1178"/>
<dbReference type="HOGENOM" id="CLU_019624_4_1_6"/>
<dbReference type="Proteomes" id="UP000002525">
    <property type="component" value="Chromosome"/>
</dbReference>
<dbReference type="GO" id="GO:0005829">
    <property type="term" value="C:cytosol"/>
    <property type="evidence" value="ECO:0007669"/>
    <property type="project" value="TreeGrafter"/>
</dbReference>
<dbReference type="GO" id="GO:0005525">
    <property type="term" value="F:GTP binding"/>
    <property type="evidence" value="ECO:0007669"/>
    <property type="project" value="UniProtKB-UniRule"/>
</dbReference>
<dbReference type="GO" id="GO:0003924">
    <property type="term" value="F:GTPase activity"/>
    <property type="evidence" value="ECO:0007669"/>
    <property type="project" value="UniProtKB-UniRule"/>
</dbReference>
<dbReference type="GO" id="GO:0046872">
    <property type="term" value="F:metal ion binding"/>
    <property type="evidence" value="ECO:0007669"/>
    <property type="project" value="UniProtKB-KW"/>
</dbReference>
<dbReference type="GO" id="GO:0030488">
    <property type="term" value="P:tRNA methylation"/>
    <property type="evidence" value="ECO:0007669"/>
    <property type="project" value="TreeGrafter"/>
</dbReference>
<dbReference type="GO" id="GO:0002098">
    <property type="term" value="P:tRNA wobble uridine modification"/>
    <property type="evidence" value="ECO:0007669"/>
    <property type="project" value="TreeGrafter"/>
</dbReference>
<dbReference type="CDD" id="cd04164">
    <property type="entry name" value="trmE"/>
    <property type="match status" value="1"/>
</dbReference>
<dbReference type="CDD" id="cd14858">
    <property type="entry name" value="TrmE_N"/>
    <property type="match status" value="1"/>
</dbReference>
<dbReference type="FunFam" id="3.30.1360.120:FF:000001">
    <property type="entry name" value="tRNA modification GTPase MnmE"/>
    <property type="match status" value="1"/>
</dbReference>
<dbReference type="FunFam" id="3.40.50.300:FF:000249">
    <property type="entry name" value="tRNA modification GTPase MnmE"/>
    <property type="match status" value="1"/>
</dbReference>
<dbReference type="Gene3D" id="3.40.50.300">
    <property type="entry name" value="P-loop containing nucleotide triphosphate hydrolases"/>
    <property type="match status" value="1"/>
</dbReference>
<dbReference type="Gene3D" id="3.30.1360.120">
    <property type="entry name" value="Probable tRNA modification gtpase trme, domain 1"/>
    <property type="match status" value="1"/>
</dbReference>
<dbReference type="Gene3D" id="1.20.120.430">
    <property type="entry name" value="tRNA modification GTPase MnmE domain 2"/>
    <property type="match status" value="1"/>
</dbReference>
<dbReference type="HAMAP" id="MF_00379">
    <property type="entry name" value="GTPase_MnmE"/>
    <property type="match status" value="1"/>
</dbReference>
<dbReference type="InterPro" id="IPR031168">
    <property type="entry name" value="G_TrmE"/>
</dbReference>
<dbReference type="InterPro" id="IPR006073">
    <property type="entry name" value="GTP-bd"/>
</dbReference>
<dbReference type="InterPro" id="IPR018948">
    <property type="entry name" value="GTP-bd_TrmE_N"/>
</dbReference>
<dbReference type="InterPro" id="IPR004520">
    <property type="entry name" value="GTPase_MnmE"/>
</dbReference>
<dbReference type="InterPro" id="IPR027368">
    <property type="entry name" value="MnmE_dom2"/>
</dbReference>
<dbReference type="InterPro" id="IPR025867">
    <property type="entry name" value="MnmE_helical"/>
</dbReference>
<dbReference type="InterPro" id="IPR027417">
    <property type="entry name" value="P-loop_NTPase"/>
</dbReference>
<dbReference type="InterPro" id="IPR005225">
    <property type="entry name" value="Small_GTP-bd"/>
</dbReference>
<dbReference type="InterPro" id="IPR027266">
    <property type="entry name" value="TrmE/GcvT_dom1"/>
</dbReference>
<dbReference type="NCBIfam" id="TIGR00450">
    <property type="entry name" value="mnmE_trmE_thdF"/>
    <property type="match status" value="1"/>
</dbReference>
<dbReference type="NCBIfam" id="NF003661">
    <property type="entry name" value="PRK05291.1-3"/>
    <property type="match status" value="1"/>
</dbReference>
<dbReference type="NCBIfam" id="TIGR00231">
    <property type="entry name" value="small_GTP"/>
    <property type="match status" value="1"/>
</dbReference>
<dbReference type="PANTHER" id="PTHR42714">
    <property type="entry name" value="TRNA MODIFICATION GTPASE GTPBP3"/>
    <property type="match status" value="1"/>
</dbReference>
<dbReference type="PANTHER" id="PTHR42714:SF2">
    <property type="entry name" value="TRNA MODIFICATION GTPASE GTPBP3, MITOCHONDRIAL"/>
    <property type="match status" value="1"/>
</dbReference>
<dbReference type="Pfam" id="PF01926">
    <property type="entry name" value="MMR_HSR1"/>
    <property type="match status" value="1"/>
</dbReference>
<dbReference type="Pfam" id="PF12631">
    <property type="entry name" value="MnmE_helical"/>
    <property type="match status" value="1"/>
</dbReference>
<dbReference type="Pfam" id="PF10396">
    <property type="entry name" value="TrmE_N"/>
    <property type="match status" value="1"/>
</dbReference>
<dbReference type="SUPFAM" id="SSF52540">
    <property type="entry name" value="P-loop containing nucleoside triphosphate hydrolases"/>
    <property type="match status" value="1"/>
</dbReference>
<dbReference type="SUPFAM" id="SSF116878">
    <property type="entry name" value="TrmE connector domain"/>
    <property type="match status" value="1"/>
</dbReference>
<dbReference type="PROSITE" id="PS51709">
    <property type="entry name" value="G_TRME"/>
    <property type="match status" value="1"/>
</dbReference>